<keyword id="KW-0903">Direct protein sequencing</keyword>
<keyword id="KW-1015">Disulfide bond</keyword>
<keyword id="KW-0278">Fertilization</keyword>
<keyword id="KW-0325">Glycoprotein</keyword>
<keyword id="KW-0358">Heparin-binding</keyword>
<keyword id="KW-1185">Reference proteome</keyword>
<keyword id="KW-0677">Repeat</keyword>
<keyword id="KW-0964">Secreted</keyword>
<keyword id="KW-0732">Signal</keyword>
<protein>
    <recommendedName>
        <fullName>Seminal plasma protein BSP-30 kDa</fullName>
        <shortName>BSP-30K</shortName>
    </recommendedName>
</protein>
<evidence type="ECO:0000255" key="1">
    <source>
        <dbReference type="PROSITE-ProRule" id="PRU00479"/>
    </source>
</evidence>
<evidence type="ECO:0000256" key="2">
    <source>
        <dbReference type="SAM" id="MobiDB-lite"/>
    </source>
</evidence>
<evidence type="ECO:0000269" key="3">
    <source>
    </source>
</evidence>
<evidence type="ECO:0000305" key="4"/>
<organism>
    <name type="scientific">Bos taurus</name>
    <name type="common">Bovine</name>
    <dbReference type="NCBI Taxonomy" id="9913"/>
    <lineage>
        <taxon>Eukaryota</taxon>
        <taxon>Metazoa</taxon>
        <taxon>Chordata</taxon>
        <taxon>Craniata</taxon>
        <taxon>Vertebrata</taxon>
        <taxon>Euteleostomi</taxon>
        <taxon>Mammalia</taxon>
        <taxon>Eutheria</taxon>
        <taxon>Laurasiatheria</taxon>
        <taxon>Artiodactyla</taxon>
        <taxon>Ruminantia</taxon>
        <taxon>Pecora</taxon>
        <taxon>Bovidae</taxon>
        <taxon>Bovinae</taxon>
        <taxon>Bos</taxon>
    </lineage>
</organism>
<name>SFP4_BOVIN</name>
<comment type="function">
    <text>Binds to spermatozoa upon ejaculation and may play a role in sperm capacitation. Displays heparin-, gelatin- and phospholipid-binding activities.</text>
</comment>
<comment type="subcellular location">
    <subcellularLocation>
        <location>Secreted</location>
    </subcellularLocation>
</comment>
<comment type="similarity">
    <text evidence="4">Belongs to the seminal plasma protein family.</text>
</comment>
<feature type="signal peptide" evidence="3">
    <location>
        <begin position="1"/>
        <end position="25"/>
    </location>
</feature>
<feature type="chain" id="PRO_0000019233" description="Seminal plasma protein BSP-30 kDa">
    <location>
        <begin position="26"/>
        <end position="183"/>
    </location>
</feature>
<feature type="domain" description="Fibronectin type-II 1" evidence="1">
    <location>
        <begin position="92"/>
        <end position="136"/>
    </location>
</feature>
<feature type="domain" description="Fibronectin type-II 2" evidence="1">
    <location>
        <begin position="137"/>
        <end position="183"/>
    </location>
</feature>
<feature type="region of interest" description="Disordered" evidence="2">
    <location>
        <begin position="23"/>
        <end position="47"/>
    </location>
</feature>
<feature type="glycosylation site" description="O-linked (GalNAc...) threonine" evidence="3">
    <location>
        <position position="36"/>
    </location>
</feature>
<feature type="glycosylation site" description="O-linked (GalNAc...) threonine" evidence="3">
    <location>
        <position position="46"/>
    </location>
</feature>
<feature type="glycosylation site" description="O-linked (GalNAc...) threonine" evidence="3">
    <location>
        <position position="57"/>
    </location>
</feature>
<feature type="glycosylation site" description="O-linked (GalNAc...) threonine" evidence="3">
    <location>
        <position position="58"/>
    </location>
</feature>
<feature type="glycosylation site" description="O-linked (GalNAc...) threonine" evidence="3">
    <location>
        <position position="59"/>
    </location>
</feature>
<feature type="glycosylation site" description="O-linked (GalNAc...) threonine" evidence="3">
    <location>
        <position position="64"/>
    </location>
</feature>
<feature type="disulfide bond" evidence="1">
    <location>
        <begin position="97"/>
        <end position="121"/>
    </location>
</feature>
<feature type="disulfide bond" evidence="1">
    <location>
        <begin position="111"/>
        <end position="134"/>
    </location>
</feature>
<feature type="disulfide bond" evidence="1">
    <location>
        <begin position="142"/>
        <end position="168"/>
    </location>
</feature>
<feature type="disulfide bond" evidence="1">
    <location>
        <begin position="156"/>
        <end position="183"/>
    </location>
</feature>
<feature type="sequence conflict" description="In Ref. 2; AA sequence." evidence="4" ref="2">
    <original>P</original>
    <variation>S</variation>
    <location>
        <position position="38"/>
    </location>
</feature>
<reference key="1">
    <citation type="submission" date="1998-04" db="EMBL/GenBank/DDBJ databases">
        <title>Complete mRNA sequence of bovine seminal plasma 30K protein (BSP-30K).</title>
        <authorList>
            <person name="Salois D."/>
            <person name="Menard M."/>
            <person name="Paquette Y."/>
            <person name="Manjunath P."/>
        </authorList>
    </citation>
    <scope>NUCLEOTIDE SEQUENCE [MRNA]</scope>
</reference>
<reference key="2">
    <citation type="journal article" date="1996" name="FEBS Lett.">
        <title>The primary structure of BSP-30K, a major lipid-, gelatin-, and heparin-binding glycoprotein of bovine seminal plasma.</title>
        <authorList>
            <person name="Calvete J.J."/>
            <person name="Mann K."/>
            <person name="Sanz L."/>
            <person name="Raida M."/>
            <person name="Toepfer-Petersen E."/>
        </authorList>
    </citation>
    <scope>PROTEIN SEQUENCE OF 26-183</scope>
    <scope>GLYCOSYLATION AT THR-36; THR-46; THR-57; THR-58; THR-59 AND THR-64</scope>
    <source>
        <tissue>Seminal plasma</tissue>
    </source>
</reference>
<accession>P81019</accession>
<accession>O97868</accession>
<sequence length="183" mass="21269">MAPLVGLFLIWAGASVFQQLHPVNGGDIPDPGSKPTPPGMADELPTETYDLPPEIYTTTFLPRTIYPQEEMPYDDKPFPSLLSKANDLNAVFEGPACAFPFTYKGKKYYMCTRKNSVLLWCSLDTEYQGNWKFCTERDEPECVFPFIYRKKSYESCTRVHSFFWRRWCSLTSNYDRDKAWKYC</sequence>
<proteinExistence type="evidence at protein level"/>
<dbReference type="EMBL" id="AF057133">
    <property type="protein sequence ID" value="AAD17519.1"/>
    <property type="molecule type" value="mRNA"/>
</dbReference>
<dbReference type="RefSeq" id="NP_777267.1">
    <property type="nucleotide sequence ID" value="NM_174842.2"/>
</dbReference>
<dbReference type="SMR" id="P81019"/>
<dbReference type="FunCoup" id="P81019">
    <property type="interactions" value="3"/>
</dbReference>
<dbReference type="STRING" id="9913.ENSBTAP00000052231"/>
<dbReference type="GlyGen" id="P81019">
    <property type="glycosylation" value="6 sites"/>
</dbReference>
<dbReference type="iPTMnet" id="P81019"/>
<dbReference type="PaxDb" id="9913-ENSBTAP00000052231"/>
<dbReference type="Ensembl" id="ENSBTAT00000054953.4">
    <property type="protein sequence ID" value="ENSBTAP00000052231.2"/>
    <property type="gene ID" value="ENSBTAG00000018882.7"/>
</dbReference>
<dbReference type="GeneID" id="317699"/>
<dbReference type="KEGG" id="bta:317699"/>
<dbReference type="CTD" id="317699"/>
<dbReference type="VEuPathDB" id="HostDB:ENSBTAG00000018882"/>
<dbReference type="eggNOG" id="KOG1565">
    <property type="taxonomic scope" value="Eukaryota"/>
</dbReference>
<dbReference type="GeneTree" id="ENSGT00940000164580"/>
<dbReference type="HOGENOM" id="CLU_126630_0_0_1"/>
<dbReference type="InParanoid" id="P81019"/>
<dbReference type="OMA" id="VEKPHED"/>
<dbReference type="OrthoDB" id="406838at2759"/>
<dbReference type="TreeFam" id="TF343543"/>
<dbReference type="Proteomes" id="UP000009136">
    <property type="component" value="Chromosome 18"/>
</dbReference>
<dbReference type="Bgee" id="ENSBTAG00000018882">
    <property type="expression patterns" value="Expressed in mammary gland fat and 12 other cell types or tissues"/>
</dbReference>
<dbReference type="GO" id="GO:0009986">
    <property type="term" value="C:cell surface"/>
    <property type="evidence" value="ECO:0000318"/>
    <property type="project" value="GO_Central"/>
</dbReference>
<dbReference type="GO" id="GO:0005615">
    <property type="term" value="C:extracellular space"/>
    <property type="evidence" value="ECO:0000314"/>
    <property type="project" value="CAFA"/>
</dbReference>
<dbReference type="GO" id="GO:0008201">
    <property type="term" value="F:heparin binding"/>
    <property type="evidence" value="ECO:0000318"/>
    <property type="project" value="GO_Central"/>
</dbReference>
<dbReference type="GO" id="GO:0033700">
    <property type="term" value="P:phospholipid efflux"/>
    <property type="evidence" value="ECO:0000314"/>
    <property type="project" value="CAFA"/>
</dbReference>
<dbReference type="GO" id="GO:1902492">
    <property type="term" value="P:positive regulation of sperm capacitation"/>
    <property type="evidence" value="ECO:0000314"/>
    <property type="project" value="CAFA"/>
</dbReference>
<dbReference type="GO" id="GO:0007338">
    <property type="term" value="P:single fertilization"/>
    <property type="evidence" value="ECO:0007669"/>
    <property type="project" value="UniProtKB-KW"/>
</dbReference>
<dbReference type="GO" id="GO:0048240">
    <property type="term" value="P:sperm capacitation"/>
    <property type="evidence" value="ECO:0000318"/>
    <property type="project" value="GO_Central"/>
</dbReference>
<dbReference type="CDD" id="cd00062">
    <property type="entry name" value="FN2"/>
    <property type="match status" value="1"/>
</dbReference>
<dbReference type="DisProt" id="DP00669"/>
<dbReference type="FunFam" id="2.10.10.10:FF:000003">
    <property type="entry name" value="binder of sperm protein homolog 1"/>
    <property type="match status" value="1"/>
</dbReference>
<dbReference type="FunFam" id="2.10.10.10:FF:000005">
    <property type="entry name" value="Epididymal sperm binding protein 1"/>
    <property type="match status" value="1"/>
</dbReference>
<dbReference type="Gene3D" id="2.10.10.10">
    <property type="entry name" value="Fibronectin, type II, collagen-binding"/>
    <property type="match status" value="2"/>
</dbReference>
<dbReference type="InterPro" id="IPR000562">
    <property type="entry name" value="FN_type2_dom"/>
</dbReference>
<dbReference type="InterPro" id="IPR036943">
    <property type="entry name" value="FN_type2_sf"/>
</dbReference>
<dbReference type="InterPro" id="IPR013806">
    <property type="entry name" value="Kringle-like"/>
</dbReference>
<dbReference type="InterPro" id="IPR051666">
    <property type="entry name" value="SP_Capacitation_Regulator"/>
</dbReference>
<dbReference type="PANTHER" id="PTHR22918">
    <property type="entry name" value="SEMINAL PLASMA PROTEIN"/>
    <property type="match status" value="1"/>
</dbReference>
<dbReference type="PANTHER" id="PTHR22918:SF3">
    <property type="entry name" value="SEMINAL PLASMA PROTEIN HSP-1"/>
    <property type="match status" value="1"/>
</dbReference>
<dbReference type="Pfam" id="PF00040">
    <property type="entry name" value="fn2"/>
    <property type="match status" value="2"/>
</dbReference>
<dbReference type="PRINTS" id="PR00013">
    <property type="entry name" value="FNTYPEII"/>
</dbReference>
<dbReference type="SMART" id="SM00059">
    <property type="entry name" value="FN2"/>
    <property type="match status" value="2"/>
</dbReference>
<dbReference type="SUPFAM" id="SSF57440">
    <property type="entry name" value="Kringle-like"/>
    <property type="match status" value="2"/>
</dbReference>
<dbReference type="PROSITE" id="PS00023">
    <property type="entry name" value="FN2_1"/>
    <property type="match status" value="1"/>
</dbReference>
<dbReference type="PROSITE" id="PS51092">
    <property type="entry name" value="FN2_2"/>
    <property type="match status" value="2"/>
</dbReference>